<organism>
    <name type="scientific">Haloquadratum walsbyi (strain DSM 16790 / HBSQ001)</name>
    <dbReference type="NCBI Taxonomy" id="362976"/>
    <lineage>
        <taxon>Archaea</taxon>
        <taxon>Methanobacteriati</taxon>
        <taxon>Methanobacteriota</taxon>
        <taxon>Stenosarchaea group</taxon>
        <taxon>Halobacteria</taxon>
        <taxon>Halobacteriales</taxon>
        <taxon>Haloferacaceae</taxon>
        <taxon>Haloquadratum</taxon>
    </lineage>
</organism>
<keyword id="KW-1185">Reference proteome</keyword>
<keyword id="KW-0687">Ribonucleoprotein</keyword>
<keyword id="KW-0689">Ribosomal protein</keyword>
<keyword id="KW-0694">RNA-binding</keyword>
<keyword id="KW-0699">rRNA-binding</keyword>
<dbReference type="EMBL" id="AM180088">
    <property type="protein sequence ID" value="CAJ52946.1"/>
    <property type="molecule type" value="Genomic_DNA"/>
</dbReference>
<dbReference type="RefSeq" id="WP_011572059.1">
    <property type="nucleotide sequence ID" value="NC_008212.1"/>
</dbReference>
<dbReference type="SMR" id="Q18GF2"/>
<dbReference type="STRING" id="362976.HQ_2839A"/>
<dbReference type="GeneID" id="4194610"/>
<dbReference type="KEGG" id="hwa:HQ_2839A"/>
<dbReference type="eggNOG" id="arCOG04067">
    <property type="taxonomic scope" value="Archaea"/>
</dbReference>
<dbReference type="HOGENOM" id="CLU_036235_0_1_2"/>
<dbReference type="Proteomes" id="UP000001975">
    <property type="component" value="Chromosome"/>
</dbReference>
<dbReference type="GO" id="GO:0022625">
    <property type="term" value="C:cytosolic large ribosomal subunit"/>
    <property type="evidence" value="ECO:0007669"/>
    <property type="project" value="TreeGrafter"/>
</dbReference>
<dbReference type="GO" id="GO:0019843">
    <property type="term" value="F:rRNA binding"/>
    <property type="evidence" value="ECO:0007669"/>
    <property type="project" value="UniProtKB-UniRule"/>
</dbReference>
<dbReference type="GO" id="GO:0003735">
    <property type="term" value="F:structural constituent of ribosome"/>
    <property type="evidence" value="ECO:0007669"/>
    <property type="project" value="InterPro"/>
</dbReference>
<dbReference type="GO" id="GO:0002181">
    <property type="term" value="P:cytoplasmic translation"/>
    <property type="evidence" value="ECO:0007669"/>
    <property type="project" value="TreeGrafter"/>
</dbReference>
<dbReference type="FunFam" id="2.30.30.30:FF:000001">
    <property type="entry name" value="50S ribosomal protein L2"/>
    <property type="match status" value="1"/>
</dbReference>
<dbReference type="FunFam" id="2.40.50.140:FF:000020">
    <property type="entry name" value="60S ribosomal protein L2"/>
    <property type="match status" value="1"/>
</dbReference>
<dbReference type="FunFam" id="4.10.950.10:FF:000002">
    <property type="entry name" value="60S ribosomal protein L2"/>
    <property type="match status" value="1"/>
</dbReference>
<dbReference type="Gene3D" id="2.30.30.30">
    <property type="match status" value="1"/>
</dbReference>
<dbReference type="Gene3D" id="2.40.50.140">
    <property type="entry name" value="Nucleic acid-binding proteins"/>
    <property type="match status" value="1"/>
</dbReference>
<dbReference type="Gene3D" id="4.10.950.10">
    <property type="entry name" value="Ribosomal protein L2, domain 3"/>
    <property type="match status" value="1"/>
</dbReference>
<dbReference type="HAMAP" id="MF_01320_A">
    <property type="entry name" value="Ribosomal_uL2_A"/>
    <property type="match status" value="1"/>
</dbReference>
<dbReference type="InterPro" id="IPR012340">
    <property type="entry name" value="NA-bd_OB-fold"/>
</dbReference>
<dbReference type="InterPro" id="IPR014722">
    <property type="entry name" value="Rib_uL2_dom2"/>
</dbReference>
<dbReference type="InterPro" id="IPR002171">
    <property type="entry name" value="Ribosomal_uL2"/>
</dbReference>
<dbReference type="InterPro" id="IPR023672">
    <property type="entry name" value="Ribosomal_uL2_arc_euk"/>
</dbReference>
<dbReference type="InterPro" id="IPR022669">
    <property type="entry name" value="Ribosomal_uL2_C"/>
</dbReference>
<dbReference type="InterPro" id="IPR022671">
    <property type="entry name" value="Ribosomal_uL2_CS"/>
</dbReference>
<dbReference type="InterPro" id="IPR014726">
    <property type="entry name" value="Ribosomal_uL2_dom3"/>
</dbReference>
<dbReference type="InterPro" id="IPR022666">
    <property type="entry name" value="Ribosomal_uL2_RNA-bd_dom"/>
</dbReference>
<dbReference type="InterPro" id="IPR008991">
    <property type="entry name" value="Translation_prot_SH3-like_sf"/>
</dbReference>
<dbReference type="NCBIfam" id="NF007180">
    <property type="entry name" value="PRK09612.1"/>
    <property type="match status" value="1"/>
</dbReference>
<dbReference type="PANTHER" id="PTHR13691:SF16">
    <property type="entry name" value="LARGE RIBOSOMAL SUBUNIT PROTEIN UL2"/>
    <property type="match status" value="1"/>
</dbReference>
<dbReference type="PANTHER" id="PTHR13691">
    <property type="entry name" value="RIBOSOMAL PROTEIN L2"/>
    <property type="match status" value="1"/>
</dbReference>
<dbReference type="Pfam" id="PF00181">
    <property type="entry name" value="Ribosomal_L2"/>
    <property type="match status" value="1"/>
</dbReference>
<dbReference type="Pfam" id="PF03947">
    <property type="entry name" value="Ribosomal_L2_C"/>
    <property type="match status" value="1"/>
</dbReference>
<dbReference type="PIRSF" id="PIRSF002158">
    <property type="entry name" value="Ribosomal_L2"/>
    <property type="match status" value="1"/>
</dbReference>
<dbReference type="SMART" id="SM01383">
    <property type="entry name" value="Ribosomal_L2"/>
    <property type="match status" value="1"/>
</dbReference>
<dbReference type="SMART" id="SM01382">
    <property type="entry name" value="Ribosomal_L2_C"/>
    <property type="match status" value="1"/>
</dbReference>
<dbReference type="SUPFAM" id="SSF50249">
    <property type="entry name" value="Nucleic acid-binding proteins"/>
    <property type="match status" value="1"/>
</dbReference>
<dbReference type="SUPFAM" id="SSF50104">
    <property type="entry name" value="Translation proteins SH3-like domain"/>
    <property type="match status" value="1"/>
</dbReference>
<dbReference type="PROSITE" id="PS00467">
    <property type="entry name" value="RIBOSOMAL_L2"/>
    <property type="match status" value="1"/>
</dbReference>
<accession>Q18GF2</accession>
<proteinExistence type="inferred from homology"/>
<evidence type="ECO:0000255" key="1">
    <source>
        <dbReference type="HAMAP-Rule" id="MF_01320"/>
    </source>
</evidence>
<evidence type="ECO:0000256" key="2">
    <source>
        <dbReference type="SAM" id="MobiDB-lite"/>
    </source>
</evidence>
<evidence type="ECO:0000305" key="3"/>
<protein>
    <recommendedName>
        <fullName evidence="1">Large ribosomal subunit protein uL2</fullName>
    </recommendedName>
    <alternativeName>
        <fullName evidence="3">50S ribosomal protein L2</fullName>
    </alternativeName>
</protein>
<comment type="function">
    <text evidence="1">One of the primary rRNA binding proteins. Required for association of the 30S and 50S subunits to form the 70S ribosome, for tRNA binding and peptide bond formation. It has been suggested to have peptidyltransferase activity; this is somewhat controversial. Makes several contacts with the 16S rRNA in the 70S ribosome.</text>
</comment>
<comment type="subunit">
    <text evidence="1">Part of the 50S ribosomal subunit. Forms a bridge to the 30S subunit in the 70S ribosome.</text>
</comment>
<comment type="similarity">
    <text evidence="1">Belongs to the universal ribosomal protein uL2 family.</text>
</comment>
<feature type="chain" id="PRO_0000310044" description="Large ribosomal subunit protein uL2">
    <location>
        <begin position="1"/>
        <end position="243"/>
    </location>
</feature>
<feature type="region of interest" description="Disordered" evidence="2">
    <location>
        <begin position="1"/>
        <end position="38"/>
    </location>
</feature>
<feature type="region of interest" description="Disordered" evidence="2">
    <location>
        <begin position="198"/>
        <end position="243"/>
    </location>
</feature>
<feature type="compositionally biased region" description="Basic residues" evidence="2">
    <location>
        <begin position="1"/>
        <end position="12"/>
    </location>
</feature>
<feature type="compositionally biased region" description="Basic and acidic residues" evidence="2">
    <location>
        <begin position="24"/>
        <end position="34"/>
    </location>
</feature>
<feature type="compositionally biased region" description="Basic and acidic residues" evidence="2">
    <location>
        <begin position="221"/>
        <end position="231"/>
    </location>
</feature>
<gene>
    <name evidence="1" type="primary">rpl2</name>
    <name type="ordered locus">HQ_2839A</name>
</gene>
<reference key="1">
    <citation type="journal article" date="2006" name="BMC Genomics">
        <title>The genome of the square archaeon Haloquadratum walsbyi: life at the limits of water activity.</title>
        <authorList>
            <person name="Bolhuis H."/>
            <person name="Palm P."/>
            <person name="Wende A."/>
            <person name="Falb M."/>
            <person name="Rampp M."/>
            <person name="Rodriguez-Valera F."/>
            <person name="Pfeiffer F."/>
            <person name="Oesterhelt D."/>
        </authorList>
    </citation>
    <scope>NUCLEOTIDE SEQUENCE [LARGE SCALE GENOMIC DNA]</scope>
    <source>
        <strain>DSM 16790 / HBSQ001</strain>
    </source>
</reference>
<sequence length="243" mass="25799">MGRRIQGQRRGRGTSTFRAPSHRYKAELSHKQSESDDTITGTIVDIEHDPARSAPVAAVEFDDGDRRLVLAPEGIRVGETMQIGVSAEIKPGNTLPLREIPEGVPVCNVESQVGDGGKFARASGTSAQLMTHDRDVVVIELPSGETKRLSPACQATIGVVAGGGRTEKPFVKAGKKHHKMKARGIKWPRVRGVAMNAVDHPFGGGGRQHPGQPKSVSRDAPPGRKVGDIASKRTGRGGNGSSE</sequence>
<name>RL2_HALWD</name>